<organism>
    <name type="scientific">Homo sapiens</name>
    <name type="common">Human</name>
    <dbReference type="NCBI Taxonomy" id="9606"/>
    <lineage>
        <taxon>Eukaryota</taxon>
        <taxon>Metazoa</taxon>
        <taxon>Chordata</taxon>
        <taxon>Craniata</taxon>
        <taxon>Vertebrata</taxon>
        <taxon>Euteleostomi</taxon>
        <taxon>Mammalia</taxon>
        <taxon>Eutheria</taxon>
        <taxon>Euarchontoglires</taxon>
        <taxon>Primates</taxon>
        <taxon>Haplorrhini</taxon>
        <taxon>Catarrhini</taxon>
        <taxon>Hominidae</taxon>
        <taxon>Homo</taxon>
    </lineage>
</organism>
<proteinExistence type="evidence at protein level"/>
<name>URGCP_HUMAN</name>
<feature type="chain" id="PRO_0000337148" description="Up-regulator of cell proliferation">
    <location>
        <begin position="1"/>
        <end position="931"/>
    </location>
</feature>
<feature type="domain" description="VLIG-type G" evidence="1">
    <location>
        <begin position="689"/>
        <end position="929"/>
    </location>
</feature>
<feature type="modified residue" description="Phosphoserine" evidence="16">
    <location>
        <position position="3"/>
    </location>
</feature>
<feature type="splice variant" id="VSP_033942" description="In isoform 3." evidence="8">
    <location>
        <begin position="1"/>
        <end position="75"/>
    </location>
</feature>
<feature type="splice variant" id="VSP_047068" description="In isoform 4." evidence="11">
    <location>
        <begin position="1"/>
        <end position="43"/>
    </location>
</feature>
<feature type="splice variant" id="VSP_052799" description="In isoform 2." evidence="9 10">
    <location>
        <begin position="6"/>
        <end position="14"/>
    </location>
</feature>
<feature type="sequence variant" id="VAR_051479" description="In dbSNP:rs2232106.">
    <original>T</original>
    <variation>A</variation>
    <location>
        <position position="697"/>
    </location>
</feature>
<feature type="sequence variant" id="VAR_051480" description="In dbSNP:rs2232107.">
    <original>L</original>
    <variation>F</variation>
    <location>
        <position position="756"/>
    </location>
</feature>
<feature type="sequence variant" id="VAR_043668" description="In dbSNP:rs2232108." evidence="5 7">
    <original>M</original>
    <variation>L</variation>
    <location>
        <position position="779"/>
    </location>
</feature>
<feature type="sequence conflict" description="In Ref. 3; CAH18244." evidence="11" ref="3">
    <location>
        <position position="6"/>
    </location>
</feature>
<feature type="sequence conflict" description="In Ref. 3; CAE45880." evidence="11" ref="3">
    <original>W</original>
    <variation>C</variation>
    <location>
        <position position="290"/>
    </location>
</feature>
<feature type="sequence conflict" description="In Ref. 3; CAH18244." evidence="11" ref="3">
    <original>Y</original>
    <variation>H</variation>
    <location>
        <position position="390"/>
    </location>
</feature>
<feature type="sequence conflict" description="In Ref. 3; CAH18244." evidence="11" ref="3">
    <original>R</original>
    <variation>Q</variation>
    <location>
        <position position="432"/>
    </location>
</feature>
<feature type="sequence conflict" description="In Ref. 3; CAE45880." evidence="11" ref="3">
    <original>W</original>
    <variation>R</variation>
    <location>
        <position position="516"/>
    </location>
</feature>
<feature type="sequence conflict" description="In Ref. 1; AAL83710." evidence="11" ref="1">
    <original>P</original>
    <variation>S</variation>
    <location>
        <position position="544"/>
    </location>
</feature>
<feature type="sequence conflict" description="In Ref. 6; BAA91312." evidence="11" ref="6">
    <original>D</original>
    <variation>G</variation>
    <location>
        <position position="601"/>
    </location>
</feature>
<feature type="sequence conflict" description="In Ref. 2; BAA96031." evidence="11" ref="2">
    <original>M</original>
    <variation>V</variation>
    <location>
        <position position="620"/>
    </location>
</feature>
<feature type="sequence conflict" description="In Ref. 3; CAE45880." evidence="11" ref="3">
    <original>A</original>
    <variation>V</variation>
    <location>
        <position position="718"/>
    </location>
</feature>
<feature type="sequence conflict" description="In Ref. 3; CAH18244." evidence="11" ref="3">
    <original>A</original>
    <variation>S</variation>
    <location>
        <position position="760"/>
    </location>
</feature>
<accession>Q8TCY9</accession>
<accession>E9PFF6</accession>
<accession>Q658M4</accession>
<accession>Q68DH6</accession>
<accession>Q6MZZ5</accession>
<accession>Q8WV98</accession>
<accession>Q9NWR7</accession>
<accession>Q9P221</accession>
<comment type="function">
    <text evidence="3 6">May be involved in cell cycle progression through the regulation of cyclin D1 expression. May participate in the development of hepatocellular carcinoma (HCC) by promoting hepatocellular growth and survival. May play an important role in development of gastric cancer.</text>
</comment>
<comment type="subcellular location">
    <subcellularLocation>
        <location evidence="3 6">Cytoplasm</location>
    </subcellularLocation>
    <subcellularLocation>
        <location evidence="3 6">Nucleus</location>
    </subcellularLocation>
    <text>In epithelial cells localized predominantly in the cytoplasm and occasionally in nuclei.</text>
</comment>
<comment type="alternative products">
    <event type="alternative splicing"/>
    <isoform>
        <id>Q8TCY9-1</id>
        <name>1</name>
        <sequence type="displayed"/>
    </isoform>
    <isoform>
        <id>Q8TCY9-2</id>
        <name evidence="3 5">2</name>
        <sequence type="described" ref="VSP_052799"/>
    </isoform>
    <isoform>
        <id>Q8TCY9-3</id>
        <name>3</name>
        <sequence type="described" ref="VSP_033942"/>
    </isoform>
    <isoform>
        <id>Q8TCY9-4</id>
        <name>4</name>
        <sequence type="described" ref="VSP_047068"/>
    </isoform>
</comment>
<comment type="tissue specificity">
    <text evidence="3 6">Strongly expressed in hepatitis B virus-infected liver and in HCC cells. Also highly expressed in well-differentiated gastric cancer tissues and various gastric cancer cell lines.</text>
</comment>
<comment type="induction">
    <text evidence="3 6">By HBxAg. Up-regulated in gastric cancer tissues and also in gastric cancer cell lines (at protein level).</text>
</comment>
<comment type="similarity">
    <text evidence="11">Belongs to the TRAFAC class dynamin-like GTPase superfamily. Very large inducible GTPase (VLIG) family.</text>
</comment>
<comment type="sequence caution" evidence="11">
    <conflict type="erroneous initiation">
        <sequence resource="EMBL-CDS" id="BAA91312"/>
    </conflict>
</comment>
<comment type="sequence caution" evidence="11">
    <conflict type="erroneous initiation">
        <sequence resource="EMBL-CDS" id="BAA96031"/>
    </conflict>
</comment>
<comment type="sequence caution" evidence="11">
    <conflict type="erroneous initiation">
        <sequence resource="EMBL-CDS" id="CAE45880"/>
    </conflict>
</comment>
<comment type="sequence caution" evidence="11">
    <conflict type="erroneous initiation">
        <sequence resource="EMBL-CDS" id="CAH18244"/>
    </conflict>
    <text>Truncated N-terminus.</text>
</comment>
<comment type="sequence caution" evidence="11">
    <conflict type="frameshift">
        <sequence resource="EMBL-CDS" id="CAH18244"/>
    </conflict>
</comment>
<sequence>MASPGIEVELLGKGHSDLGEVAPEIKASERRTAVAIADLEWREMEGDDCEFRYGDGTNEAQDNDFPTVERSRLQEMLSLLGLETYQVQKLSLQDSLQISFDSMKNWAPQVPKDLPWNFLRKLQALNADARNTTMVLDVLPDARPVEKESQMEEEIIYWDPADDLAADIYSFSELPTPDTPVNPLDLLCALLLSSDSFLQQEIALKMALCQFALPLVLPDSENHYHTFLLWAMRGIVRTWWSQPPRGMGSFREDSVVLSRAPAFAFVRMDVSSNSKSQLLNAVLSPGHRQWDCFWHRDLNLGTNAREISDGLVEISWFFPSGREDLDIFPEPVAFLNLRGDIGSHWLQFKLLTEISSAVFILTDNISKKEYKLLYSMKESTTKYYFILSPYRGKRNTNLRFLNKLIPVLKIDHSHVLVKVSSTDSDSFVKRIRAIVGNVLRAPCRRVSVEDMAHAARKLGLKVDEDCEECQKAKDRMERITRKIKDSDAYRRDELRLQGDPWRKAAQVEKEFCQLQWAVDPPEKHRAELRRRLLELRMQQNGHDPSSGVQEFISGISSPSLSEKQYFLRWMEWGLARVAQPRLRQPPETLLTLRPKHGGTTDVGEPLWPEPLGVEHFLREMGQFYEAESCLVEAGRLPAGQRRFAHFPGLASELLLTGLPLELIDGSTLSMPVRWVTGLLKELHVRLERRSRLVVLSTVGVPGTGKSTLLNTMFGLRFATGKSCGPRGAFMQLITVAEGFSQDLGCDHILVIDSGGLIGGALTSAGDRFELEASLATLLMGLSNVTVISLAETKDIPAAILHAFLRLEKTGHMPNYQFVYQNLHDVSVPGPRPRDKRQLLDPPGDLSRAAAQMEKQGDGFRALAGLAFCDPEKQHIWHIPGLWHGAPPMAAVSLAYSEAIFELKRCLLENIRNGLSNQNKNIQQLIELVRRL</sequence>
<dbReference type="EMBL" id="AY078404">
    <property type="protein sequence ID" value="AAL83710.1"/>
    <property type="molecule type" value="mRNA"/>
</dbReference>
<dbReference type="EMBL" id="AB040940">
    <property type="protein sequence ID" value="BAA96031.1"/>
    <property type="status" value="ALT_INIT"/>
    <property type="molecule type" value="mRNA"/>
</dbReference>
<dbReference type="EMBL" id="AL833744">
    <property type="protein sequence ID" value="CAH56246.1"/>
    <property type="molecule type" value="mRNA"/>
</dbReference>
<dbReference type="EMBL" id="BX640797">
    <property type="protein sequence ID" value="CAE45880.1"/>
    <property type="status" value="ALT_INIT"/>
    <property type="molecule type" value="mRNA"/>
</dbReference>
<dbReference type="EMBL" id="CR749398">
    <property type="protein sequence ID" value="CAH18244.1"/>
    <property type="status" value="ALT_SEQ"/>
    <property type="molecule type" value="mRNA"/>
</dbReference>
<dbReference type="EMBL" id="AC004985">
    <property type="status" value="NOT_ANNOTATED_CDS"/>
    <property type="molecule type" value="mRNA"/>
</dbReference>
<dbReference type="EMBL" id="BC018426">
    <property type="protein sequence ID" value="AAH18426.2"/>
    <property type="molecule type" value="mRNA"/>
</dbReference>
<dbReference type="EMBL" id="AK000661">
    <property type="protein sequence ID" value="BAA91312.1"/>
    <property type="status" value="ALT_INIT"/>
    <property type="molecule type" value="mRNA"/>
</dbReference>
<dbReference type="CCDS" id="CCDS43572.1">
    <molecule id="Q8TCY9-4"/>
</dbReference>
<dbReference type="CCDS" id="CCDS47577.1">
    <molecule id="Q8TCY9-2"/>
</dbReference>
<dbReference type="CCDS" id="CCDS47578.1">
    <molecule id="Q8TCY9-1"/>
</dbReference>
<dbReference type="RefSeq" id="NP_001071131.1">
    <molecule id="Q8TCY9-1"/>
    <property type="nucleotide sequence ID" value="NM_001077663.3"/>
</dbReference>
<dbReference type="RefSeq" id="NP_001071132.1">
    <molecule id="Q8TCY9-4"/>
    <property type="nucleotide sequence ID" value="NM_001077664.3"/>
</dbReference>
<dbReference type="RefSeq" id="NP_001277004.1">
    <molecule id="Q8TCY9-4"/>
    <property type="nucleotide sequence ID" value="NM_001290075.2"/>
</dbReference>
<dbReference type="RefSeq" id="NP_001277005.1">
    <molecule id="Q8TCY9-4"/>
    <property type="nucleotide sequence ID" value="NM_001290076.2"/>
</dbReference>
<dbReference type="RefSeq" id="NP_060390.3">
    <molecule id="Q8TCY9-2"/>
    <property type="nucleotide sequence ID" value="NM_017920.4"/>
</dbReference>
<dbReference type="BioGRID" id="120797">
    <property type="interactions" value="33"/>
</dbReference>
<dbReference type="FunCoup" id="Q8TCY9">
    <property type="interactions" value="504"/>
</dbReference>
<dbReference type="IntAct" id="Q8TCY9">
    <property type="interactions" value="18"/>
</dbReference>
<dbReference type="MINT" id="Q8TCY9"/>
<dbReference type="STRING" id="9606.ENSP00000396918"/>
<dbReference type="iPTMnet" id="Q8TCY9"/>
<dbReference type="PhosphoSitePlus" id="Q8TCY9"/>
<dbReference type="BioMuta" id="URGCP"/>
<dbReference type="DMDM" id="189038114"/>
<dbReference type="jPOST" id="Q8TCY9"/>
<dbReference type="MassIVE" id="Q8TCY9"/>
<dbReference type="PaxDb" id="9606-ENSP00000396918"/>
<dbReference type="PeptideAtlas" id="Q8TCY9"/>
<dbReference type="ProteomicsDB" id="20091"/>
<dbReference type="ProteomicsDB" id="74196">
    <molecule id="Q8TCY9-1"/>
</dbReference>
<dbReference type="ProteomicsDB" id="74197">
    <molecule id="Q8TCY9-2"/>
</dbReference>
<dbReference type="ProteomicsDB" id="74198">
    <molecule id="Q8TCY9-3"/>
</dbReference>
<dbReference type="Pumba" id="Q8TCY9"/>
<dbReference type="Antibodypedia" id="7083">
    <property type="antibodies" value="163 antibodies from 25 providers"/>
</dbReference>
<dbReference type="DNASU" id="55665"/>
<dbReference type="Ensembl" id="ENST00000336086.10">
    <molecule id="Q8TCY9-4"/>
    <property type="protein sequence ID" value="ENSP00000336872.6"/>
    <property type="gene ID" value="ENSG00000106608.17"/>
</dbReference>
<dbReference type="Ensembl" id="ENST00000402306.7">
    <molecule id="Q8TCY9-2"/>
    <property type="protein sequence ID" value="ENSP00000384955.3"/>
    <property type="gene ID" value="ENSG00000106608.17"/>
</dbReference>
<dbReference type="Ensembl" id="ENST00000443736.5">
    <molecule id="Q8TCY9-4"/>
    <property type="protein sequence ID" value="ENSP00000392136.1"/>
    <property type="gene ID" value="ENSG00000106608.17"/>
</dbReference>
<dbReference type="Ensembl" id="ENST00000453200.6">
    <molecule id="Q8TCY9-1"/>
    <property type="protein sequence ID" value="ENSP00000396918.1"/>
    <property type="gene ID" value="ENSG00000106608.17"/>
</dbReference>
<dbReference type="GeneID" id="55665"/>
<dbReference type="KEGG" id="hsa:55665"/>
<dbReference type="MANE-Select" id="ENST00000453200.6">
    <property type="protein sequence ID" value="ENSP00000396918.1"/>
    <property type="RefSeq nucleotide sequence ID" value="NM_001077663.3"/>
    <property type="RefSeq protein sequence ID" value="NP_001071131.1"/>
</dbReference>
<dbReference type="UCSC" id="uc003tiu.4">
    <molecule id="Q8TCY9-1"/>
    <property type="organism name" value="human"/>
</dbReference>
<dbReference type="AGR" id="HGNC:30890"/>
<dbReference type="CTD" id="55665"/>
<dbReference type="DisGeNET" id="55665"/>
<dbReference type="GeneCards" id="URGCP"/>
<dbReference type="HGNC" id="HGNC:30890">
    <property type="gene designation" value="URGCP"/>
</dbReference>
<dbReference type="HPA" id="ENSG00000106608">
    <property type="expression patterns" value="Low tissue specificity"/>
</dbReference>
<dbReference type="MIM" id="610337">
    <property type="type" value="gene"/>
</dbReference>
<dbReference type="neXtProt" id="NX_Q8TCY9"/>
<dbReference type="OpenTargets" id="ENSG00000106608"/>
<dbReference type="PharmGKB" id="PA165618458"/>
<dbReference type="VEuPathDB" id="HostDB:ENSG00000106608"/>
<dbReference type="eggNOG" id="ENOG502QU4G">
    <property type="taxonomic scope" value="Eukaryota"/>
</dbReference>
<dbReference type="GeneTree" id="ENSGT00940000154390"/>
<dbReference type="HOGENOM" id="CLU_002276_0_0_1"/>
<dbReference type="InParanoid" id="Q8TCY9"/>
<dbReference type="OMA" id="QENTDGT"/>
<dbReference type="OrthoDB" id="1597724at2759"/>
<dbReference type="PAN-GO" id="Q8TCY9">
    <property type="GO annotations" value="0 GO annotations based on evolutionary models"/>
</dbReference>
<dbReference type="PhylomeDB" id="Q8TCY9"/>
<dbReference type="TreeFam" id="TF335271"/>
<dbReference type="PathwayCommons" id="Q8TCY9"/>
<dbReference type="SignaLink" id="Q8TCY9"/>
<dbReference type="BioGRID-ORCS" id="55665">
    <property type="hits" value="30 hits in 1150 CRISPR screens"/>
</dbReference>
<dbReference type="ChiTaRS" id="URGCP">
    <property type="organism name" value="human"/>
</dbReference>
<dbReference type="GeneWiki" id="URG4"/>
<dbReference type="GenomeRNAi" id="55665"/>
<dbReference type="Pharos" id="Q8TCY9">
    <property type="development level" value="Tbio"/>
</dbReference>
<dbReference type="PRO" id="PR:Q8TCY9"/>
<dbReference type="Proteomes" id="UP000005640">
    <property type="component" value="Chromosome 7"/>
</dbReference>
<dbReference type="RNAct" id="Q8TCY9">
    <property type="molecule type" value="protein"/>
</dbReference>
<dbReference type="Bgee" id="ENSG00000106608">
    <property type="expression patterns" value="Expressed in right adrenal gland cortex and 189 other cell types or tissues"/>
</dbReference>
<dbReference type="ExpressionAtlas" id="Q8TCY9">
    <property type="expression patterns" value="baseline and differential"/>
</dbReference>
<dbReference type="GO" id="GO:0005829">
    <property type="term" value="C:cytosol"/>
    <property type="evidence" value="ECO:0000314"/>
    <property type="project" value="HPA"/>
</dbReference>
<dbReference type="GO" id="GO:0005634">
    <property type="term" value="C:nucleus"/>
    <property type="evidence" value="ECO:0007669"/>
    <property type="project" value="UniProtKB-SubCell"/>
</dbReference>
<dbReference type="GO" id="GO:0005525">
    <property type="term" value="F:GTP binding"/>
    <property type="evidence" value="ECO:0007669"/>
    <property type="project" value="UniProtKB-KW"/>
</dbReference>
<dbReference type="FunFam" id="3.40.50.300:FF:000954">
    <property type="entry name" value="Upregulator of cell proliferation"/>
    <property type="match status" value="1"/>
</dbReference>
<dbReference type="Gene3D" id="3.40.50.300">
    <property type="entry name" value="P-loop containing nucleotide triphosphate hydrolases"/>
    <property type="match status" value="1"/>
</dbReference>
<dbReference type="InterPro" id="IPR030383">
    <property type="entry name" value="G_VLIG_dom"/>
</dbReference>
<dbReference type="InterPro" id="IPR006073">
    <property type="entry name" value="GTP-bd"/>
</dbReference>
<dbReference type="InterPro" id="IPR027417">
    <property type="entry name" value="P-loop_NTPase"/>
</dbReference>
<dbReference type="PANTHER" id="PTHR22796:SF13">
    <property type="entry name" value="UP-REGULATOR OF CELL PROLIFERATION"/>
    <property type="match status" value="1"/>
</dbReference>
<dbReference type="PANTHER" id="PTHR22796">
    <property type="entry name" value="URG4-RELATED"/>
    <property type="match status" value="1"/>
</dbReference>
<dbReference type="Pfam" id="PF25496">
    <property type="entry name" value="URGCP"/>
    <property type="match status" value="1"/>
</dbReference>
<dbReference type="PRINTS" id="PR00326">
    <property type="entry name" value="GTP1OBG"/>
</dbReference>
<dbReference type="SUPFAM" id="SSF52540">
    <property type="entry name" value="P-loop containing nucleoside triphosphate hydrolases"/>
    <property type="match status" value="1"/>
</dbReference>
<dbReference type="PROSITE" id="PS51717">
    <property type="entry name" value="G_VLIG"/>
    <property type="match status" value="1"/>
</dbReference>
<keyword id="KW-0025">Alternative splicing</keyword>
<keyword id="KW-0131">Cell cycle</keyword>
<keyword id="KW-0963">Cytoplasm</keyword>
<keyword id="KW-0342">GTP-binding</keyword>
<keyword id="KW-0547">Nucleotide-binding</keyword>
<keyword id="KW-0539">Nucleus</keyword>
<keyword id="KW-0597">Phosphoprotein</keyword>
<keyword id="KW-1267">Proteomics identification</keyword>
<keyword id="KW-1185">Reference proteome</keyword>
<evidence type="ECO:0000255" key="1">
    <source>
        <dbReference type="PROSITE-ProRule" id="PRU01054"/>
    </source>
</evidence>
<evidence type="ECO:0000269" key="2">
    <source>
    </source>
</evidence>
<evidence type="ECO:0000269" key="3">
    <source>
    </source>
</evidence>
<evidence type="ECO:0000269" key="4">
    <source>
    </source>
</evidence>
<evidence type="ECO:0000269" key="5">
    <source>
    </source>
</evidence>
<evidence type="ECO:0000269" key="6">
    <source>
    </source>
</evidence>
<evidence type="ECO:0000269" key="7">
    <source>
    </source>
</evidence>
<evidence type="ECO:0000303" key="8">
    <source>
    </source>
</evidence>
<evidence type="ECO:0000303" key="9">
    <source>
    </source>
</evidence>
<evidence type="ECO:0000303" key="10">
    <source>
    </source>
</evidence>
<evidence type="ECO:0000305" key="11"/>
<evidence type="ECO:0000312" key="12">
    <source>
        <dbReference type="EMBL" id="AAH18426.2"/>
    </source>
</evidence>
<evidence type="ECO:0000312" key="13">
    <source>
        <dbReference type="EMBL" id="AAL83710.1"/>
    </source>
</evidence>
<evidence type="ECO:0000312" key="14">
    <source>
        <dbReference type="EMBL" id="BAA91312.1"/>
    </source>
</evidence>
<evidence type="ECO:0000312" key="15">
    <source>
        <dbReference type="EMBL" id="BAA96031.1"/>
    </source>
</evidence>
<evidence type="ECO:0007744" key="16">
    <source>
    </source>
</evidence>
<reference evidence="11 13" key="1">
    <citation type="journal article" date="2002" name="Neoplasia">
        <title>Hepatitis Bx antigen stimulates expression of a novel cellular gene, URG4, that promotes hepatocellular growth and survival.</title>
        <authorList>
            <person name="Tufan N.L.S."/>
            <person name="Lian Z."/>
            <person name="Liu J."/>
            <person name="Pan J."/>
            <person name="Arbuthnot P."/>
            <person name="Kew M."/>
            <person name="Clayton M.M."/>
            <person name="Zhu M."/>
            <person name="Feitelson M.A."/>
        </authorList>
    </citation>
    <scope>NUCLEOTIDE SEQUENCE [MRNA] (ISOFORM 2)</scope>
    <scope>FUNCTION</scope>
    <scope>SUBCELLULAR LOCATION</scope>
    <scope>TISSUE SPECIFICITY</scope>
    <scope>INDUCTION BY HBXAG</scope>
</reference>
<reference evidence="11 15" key="2">
    <citation type="journal article" date="2000" name="DNA Res.">
        <title>Prediction of the coding sequences of unidentified human genes. XVII. The complete sequences of 100 new cDNA clones from brain which code for large proteins in vitro.</title>
        <authorList>
            <person name="Nagase T."/>
            <person name="Kikuno R."/>
            <person name="Ishikawa K."/>
            <person name="Hirosawa M."/>
            <person name="Ohara O."/>
        </authorList>
    </citation>
    <scope>NUCLEOTIDE SEQUENCE [LARGE SCALE MRNA] (ISOFORM 3)</scope>
    <source>
        <tissue evidence="2">Brain</tissue>
    </source>
</reference>
<reference key="3">
    <citation type="journal article" date="2007" name="BMC Genomics">
        <title>The full-ORF clone resource of the German cDNA consortium.</title>
        <authorList>
            <person name="Bechtel S."/>
            <person name="Rosenfelder H."/>
            <person name="Duda A."/>
            <person name="Schmidt C.P."/>
            <person name="Ernst U."/>
            <person name="Wellenreuther R."/>
            <person name="Mehrle A."/>
            <person name="Schuster C."/>
            <person name="Bahr A."/>
            <person name="Bloecker H."/>
            <person name="Heubner D."/>
            <person name="Hoerlein A."/>
            <person name="Michel G."/>
            <person name="Wedler H."/>
            <person name="Koehrer K."/>
            <person name="Ottenwaelder B."/>
            <person name="Poustka A."/>
            <person name="Wiemann S."/>
            <person name="Schupp I."/>
        </authorList>
    </citation>
    <scope>NUCLEOTIDE SEQUENCE [LARGE SCALE MRNA] (ISOFORM 1)</scope>
    <scope>NUCLEOTIDE SEQUENCE [LARGE SCALE MRNA] OF 470-931 (ISOFORMS 1/2)</scope>
    <scope>VARIANT LEU-779</scope>
    <source>
        <tissue>Endometrial adenocarcinoma</tissue>
        <tissue>Endometrium</tissue>
        <tissue>Stomach</tissue>
    </source>
</reference>
<reference evidence="11" key="4">
    <citation type="journal article" date="2003" name="Nature">
        <title>The DNA sequence of human chromosome 7.</title>
        <authorList>
            <person name="Hillier L.W."/>
            <person name="Fulton R.S."/>
            <person name="Fulton L.A."/>
            <person name="Graves T.A."/>
            <person name="Pepin K.H."/>
            <person name="Wagner-McPherson C."/>
            <person name="Layman D."/>
            <person name="Maas J."/>
            <person name="Jaeger S."/>
            <person name="Walker R."/>
            <person name="Wylie K."/>
            <person name="Sekhon M."/>
            <person name="Becker M.C."/>
            <person name="O'Laughlin M.D."/>
            <person name="Schaller M.E."/>
            <person name="Fewell G.A."/>
            <person name="Delehaunty K.D."/>
            <person name="Miner T.L."/>
            <person name="Nash W.E."/>
            <person name="Cordes M."/>
            <person name="Du H."/>
            <person name="Sun H."/>
            <person name="Edwards J."/>
            <person name="Bradshaw-Cordum H."/>
            <person name="Ali J."/>
            <person name="Andrews S."/>
            <person name="Isak A."/>
            <person name="Vanbrunt A."/>
            <person name="Nguyen C."/>
            <person name="Du F."/>
            <person name="Lamar B."/>
            <person name="Courtney L."/>
            <person name="Kalicki J."/>
            <person name="Ozersky P."/>
            <person name="Bielicki L."/>
            <person name="Scott K."/>
            <person name="Holmes A."/>
            <person name="Harkins R."/>
            <person name="Harris A."/>
            <person name="Strong C.M."/>
            <person name="Hou S."/>
            <person name="Tomlinson C."/>
            <person name="Dauphin-Kohlberg S."/>
            <person name="Kozlowicz-Reilly A."/>
            <person name="Leonard S."/>
            <person name="Rohlfing T."/>
            <person name="Rock S.M."/>
            <person name="Tin-Wollam A.-M."/>
            <person name="Abbott A."/>
            <person name="Minx P."/>
            <person name="Maupin R."/>
            <person name="Strowmatt C."/>
            <person name="Latreille P."/>
            <person name="Miller N."/>
            <person name="Johnson D."/>
            <person name="Murray J."/>
            <person name="Woessner J.P."/>
            <person name="Wendl M.C."/>
            <person name="Yang S.-P."/>
            <person name="Schultz B.R."/>
            <person name="Wallis J.W."/>
            <person name="Spieth J."/>
            <person name="Bieri T.A."/>
            <person name="Nelson J.O."/>
            <person name="Berkowicz N."/>
            <person name="Wohldmann P.E."/>
            <person name="Cook L.L."/>
            <person name="Hickenbotham M.T."/>
            <person name="Eldred J."/>
            <person name="Williams D."/>
            <person name="Bedell J.A."/>
            <person name="Mardis E.R."/>
            <person name="Clifton S.W."/>
            <person name="Chissoe S.L."/>
            <person name="Marra M.A."/>
            <person name="Raymond C."/>
            <person name="Haugen E."/>
            <person name="Gillett W."/>
            <person name="Zhou Y."/>
            <person name="James R."/>
            <person name="Phelps K."/>
            <person name="Iadanoto S."/>
            <person name="Bubb K."/>
            <person name="Simms E."/>
            <person name="Levy R."/>
            <person name="Clendenning J."/>
            <person name="Kaul R."/>
            <person name="Kent W.J."/>
            <person name="Furey T.S."/>
            <person name="Baertsch R.A."/>
            <person name="Brent M.R."/>
            <person name="Keibler E."/>
            <person name="Flicek P."/>
            <person name="Bork P."/>
            <person name="Suyama M."/>
            <person name="Bailey J.A."/>
            <person name="Portnoy M.E."/>
            <person name="Torrents D."/>
            <person name="Chinwalla A.T."/>
            <person name="Gish W.R."/>
            <person name="Eddy S.R."/>
            <person name="McPherson J.D."/>
            <person name="Olson M.V."/>
            <person name="Eichler E.E."/>
            <person name="Green E.D."/>
            <person name="Waterston R.H."/>
            <person name="Wilson R.K."/>
        </authorList>
    </citation>
    <scope>NUCLEOTIDE SEQUENCE [LARGE SCALE GENOMIC DNA]</scope>
</reference>
<reference evidence="11 12" key="5">
    <citation type="journal article" date="2004" name="Genome Res.">
        <title>The status, quality, and expansion of the NIH full-length cDNA project: the Mammalian Gene Collection (MGC).</title>
        <authorList>
            <consortium name="The MGC Project Team"/>
        </authorList>
    </citation>
    <scope>NUCLEOTIDE SEQUENCE [LARGE SCALE MRNA] (ISOFORM 2)</scope>
    <scope>VARIANT LEU-779</scope>
    <source>
        <tissue evidence="12">Glioblastoma</tissue>
    </source>
</reference>
<reference evidence="11 14" key="6">
    <citation type="journal article" date="2004" name="Nat. Genet.">
        <title>Complete sequencing and characterization of 21,243 full-length human cDNAs.</title>
        <authorList>
            <person name="Ota T."/>
            <person name="Suzuki Y."/>
            <person name="Nishikawa T."/>
            <person name="Otsuki T."/>
            <person name="Sugiyama T."/>
            <person name="Irie R."/>
            <person name="Wakamatsu A."/>
            <person name="Hayashi K."/>
            <person name="Sato H."/>
            <person name="Nagai K."/>
            <person name="Kimura K."/>
            <person name="Makita H."/>
            <person name="Sekine M."/>
            <person name="Obayashi M."/>
            <person name="Nishi T."/>
            <person name="Shibahara T."/>
            <person name="Tanaka T."/>
            <person name="Ishii S."/>
            <person name="Yamamoto J."/>
            <person name="Saito K."/>
            <person name="Kawai Y."/>
            <person name="Isono Y."/>
            <person name="Nakamura Y."/>
            <person name="Nagahari K."/>
            <person name="Murakami K."/>
            <person name="Yasuda T."/>
            <person name="Iwayanagi T."/>
            <person name="Wagatsuma M."/>
            <person name="Shiratori A."/>
            <person name="Sudo H."/>
            <person name="Hosoiri T."/>
            <person name="Kaku Y."/>
            <person name="Kodaira H."/>
            <person name="Kondo H."/>
            <person name="Sugawara M."/>
            <person name="Takahashi M."/>
            <person name="Kanda K."/>
            <person name="Yokoi T."/>
            <person name="Furuya T."/>
            <person name="Kikkawa E."/>
            <person name="Omura Y."/>
            <person name="Abe K."/>
            <person name="Kamihara K."/>
            <person name="Katsuta N."/>
            <person name="Sato K."/>
            <person name="Tanikawa M."/>
            <person name="Yamazaki M."/>
            <person name="Ninomiya K."/>
            <person name="Ishibashi T."/>
            <person name="Yamashita H."/>
            <person name="Murakawa K."/>
            <person name="Fujimori K."/>
            <person name="Tanai H."/>
            <person name="Kimata M."/>
            <person name="Watanabe M."/>
            <person name="Hiraoka S."/>
            <person name="Chiba Y."/>
            <person name="Ishida S."/>
            <person name="Ono Y."/>
            <person name="Takiguchi S."/>
            <person name="Watanabe S."/>
            <person name="Yosida M."/>
            <person name="Hotuta T."/>
            <person name="Kusano J."/>
            <person name="Kanehori K."/>
            <person name="Takahashi-Fujii A."/>
            <person name="Hara H."/>
            <person name="Tanase T.-O."/>
            <person name="Nomura Y."/>
            <person name="Togiya S."/>
            <person name="Komai F."/>
            <person name="Hara R."/>
            <person name="Takeuchi K."/>
            <person name="Arita M."/>
            <person name="Imose N."/>
            <person name="Musashino K."/>
            <person name="Yuuki H."/>
            <person name="Oshima A."/>
            <person name="Sasaki N."/>
            <person name="Aotsuka S."/>
            <person name="Yoshikawa Y."/>
            <person name="Matsunawa H."/>
            <person name="Ichihara T."/>
            <person name="Shiohata N."/>
            <person name="Sano S."/>
            <person name="Moriya S."/>
            <person name="Momiyama H."/>
            <person name="Satoh N."/>
            <person name="Takami S."/>
            <person name="Terashima Y."/>
            <person name="Suzuki O."/>
            <person name="Nakagawa S."/>
            <person name="Senoh A."/>
            <person name="Mizoguchi H."/>
            <person name="Goto Y."/>
            <person name="Shimizu F."/>
            <person name="Wakebe H."/>
            <person name="Hishigaki H."/>
            <person name="Watanabe T."/>
            <person name="Sugiyama A."/>
            <person name="Takemoto M."/>
            <person name="Kawakami B."/>
            <person name="Yamazaki M."/>
            <person name="Watanabe K."/>
            <person name="Kumagai A."/>
            <person name="Itakura S."/>
            <person name="Fukuzumi Y."/>
            <person name="Fujimori Y."/>
            <person name="Komiyama M."/>
            <person name="Tashiro H."/>
            <person name="Tanigami A."/>
            <person name="Fujiwara T."/>
            <person name="Ono T."/>
            <person name="Yamada K."/>
            <person name="Fujii Y."/>
            <person name="Ozaki K."/>
            <person name="Hirao M."/>
            <person name="Ohmori Y."/>
            <person name="Kawabata A."/>
            <person name="Hikiji T."/>
            <person name="Kobatake N."/>
            <person name="Inagaki H."/>
            <person name="Ikema Y."/>
            <person name="Okamoto S."/>
            <person name="Okitani R."/>
            <person name="Kawakami T."/>
            <person name="Noguchi S."/>
            <person name="Itoh T."/>
            <person name="Shigeta K."/>
            <person name="Senba T."/>
            <person name="Matsumura K."/>
            <person name="Nakajima Y."/>
            <person name="Mizuno T."/>
            <person name="Morinaga M."/>
            <person name="Sasaki M."/>
            <person name="Togashi T."/>
            <person name="Oyama M."/>
            <person name="Hata H."/>
            <person name="Watanabe M."/>
            <person name="Komatsu T."/>
            <person name="Mizushima-Sugano J."/>
            <person name="Satoh T."/>
            <person name="Shirai Y."/>
            <person name="Takahashi Y."/>
            <person name="Nakagawa K."/>
            <person name="Okumura K."/>
            <person name="Nagase T."/>
            <person name="Nomura N."/>
            <person name="Kikuchi H."/>
            <person name="Masuho Y."/>
            <person name="Yamashita R."/>
            <person name="Nakai K."/>
            <person name="Yada T."/>
            <person name="Nakamura Y."/>
            <person name="Ohara O."/>
            <person name="Isogai T."/>
            <person name="Sugano S."/>
        </authorList>
    </citation>
    <scope>NUCLEOTIDE SEQUENCE [LARGE SCALE MRNA] OF 601-931</scope>
    <source>
        <tissue evidence="4">Signet-ring cell carcinoma</tissue>
    </source>
</reference>
<reference evidence="11" key="7">
    <citation type="journal article" date="2006" name="Neoplasia">
        <title>Enhanced cell survival of gastric cancer cells by a novel gene URG4.</title>
        <authorList>
            <person name="Song J."/>
            <person name="Xie H."/>
            <person name="Lian Z."/>
            <person name="Yang G."/>
            <person name="Du R."/>
            <person name="Du Y."/>
            <person name="Zou X."/>
            <person name="Jin H."/>
            <person name="Gao J."/>
            <person name="Liu J."/>
            <person name="Fan D."/>
        </authorList>
    </citation>
    <scope>FUNCTION</scope>
    <scope>SUBCELLULAR LOCATION</scope>
    <scope>TISSUE SPECIFICITY</scope>
    <scope>INDUCTION</scope>
</reference>
<reference key="8">
    <citation type="journal article" date="2013" name="J. Proteome Res.">
        <title>Toward a comprehensive characterization of a human cancer cell phosphoproteome.</title>
        <authorList>
            <person name="Zhou H."/>
            <person name="Di Palma S."/>
            <person name="Preisinger C."/>
            <person name="Peng M."/>
            <person name="Polat A.N."/>
            <person name="Heck A.J."/>
            <person name="Mohammed S."/>
        </authorList>
    </citation>
    <scope>PHOSPHORYLATION [LARGE SCALE ANALYSIS] AT SER-3</scope>
    <scope>IDENTIFICATION BY MASS SPECTROMETRY [LARGE SCALE ANALYSIS]</scope>
    <source>
        <tissue>Cervix carcinoma</tissue>
        <tissue>Erythroleukemia</tissue>
    </source>
</reference>
<protein>
    <recommendedName>
        <fullName>Up-regulator of cell proliferation</fullName>
    </recommendedName>
    <alternativeName>
        <fullName>HBV X protein up-regulated gene 4 protein</fullName>
    </alternativeName>
    <alternativeName>
        <fullName>HBxAg up-regulated gene 4 protein</fullName>
    </alternativeName>
</protein>
<gene>
    <name type="primary">URGCP</name>
    <name evidence="15" type="synonym">KIAA1507</name>
    <name type="synonym">URG4</name>
</gene>